<evidence type="ECO:0000255" key="1">
    <source>
        <dbReference type="HAMAP-Rule" id="MF_00578"/>
    </source>
</evidence>
<feature type="chain" id="PRO_1000129607" description="Glutamate--cysteine ligase">
    <location>
        <begin position="1"/>
        <end position="518"/>
    </location>
</feature>
<accession>B5BEN1</accession>
<organism>
    <name type="scientific">Salmonella paratyphi A (strain AKU_12601)</name>
    <dbReference type="NCBI Taxonomy" id="554290"/>
    <lineage>
        <taxon>Bacteria</taxon>
        <taxon>Pseudomonadati</taxon>
        <taxon>Pseudomonadota</taxon>
        <taxon>Gammaproteobacteria</taxon>
        <taxon>Enterobacterales</taxon>
        <taxon>Enterobacteriaceae</taxon>
        <taxon>Salmonella</taxon>
    </lineage>
</organism>
<dbReference type="EC" id="6.3.2.2" evidence="1"/>
<dbReference type="EMBL" id="FM200053">
    <property type="protein sequence ID" value="CAR60731.1"/>
    <property type="molecule type" value="Genomic_DNA"/>
</dbReference>
<dbReference type="RefSeq" id="WP_000611821.1">
    <property type="nucleotide sequence ID" value="NC_011147.1"/>
</dbReference>
<dbReference type="SMR" id="B5BEN1"/>
<dbReference type="KEGG" id="sek:SSPA2495"/>
<dbReference type="HOGENOM" id="CLU_020728_3_0_6"/>
<dbReference type="UniPathway" id="UPA00142">
    <property type="reaction ID" value="UER00209"/>
</dbReference>
<dbReference type="Proteomes" id="UP000001869">
    <property type="component" value="Chromosome"/>
</dbReference>
<dbReference type="GO" id="GO:0005829">
    <property type="term" value="C:cytosol"/>
    <property type="evidence" value="ECO:0007669"/>
    <property type="project" value="TreeGrafter"/>
</dbReference>
<dbReference type="GO" id="GO:0005524">
    <property type="term" value="F:ATP binding"/>
    <property type="evidence" value="ECO:0007669"/>
    <property type="project" value="UniProtKB-KW"/>
</dbReference>
<dbReference type="GO" id="GO:0004357">
    <property type="term" value="F:glutamate-cysteine ligase activity"/>
    <property type="evidence" value="ECO:0007669"/>
    <property type="project" value="UniProtKB-UniRule"/>
</dbReference>
<dbReference type="GO" id="GO:0046872">
    <property type="term" value="F:metal ion binding"/>
    <property type="evidence" value="ECO:0007669"/>
    <property type="project" value="TreeGrafter"/>
</dbReference>
<dbReference type="GO" id="GO:0006750">
    <property type="term" value="P:glutathione biosynthetic process"/>
    <property type="evidence" value="ECO:0007669"/>
    <property type="project" value="UniProtKB-UniRule"/>
</dbReference>
<dbReference type="FunFam" id="3.30.590.20:FF:000001">
    <property type="entry name" value="Glutamate--cysteine ligase"/>
    <property type="match status" value="1"/>
</dbReference>
<dbReference type="Gene3D" id="3.30.590.20">
    <property type="match status" value="1"/>
</dbReference>
<dbReference type="HAMAP" id="MF_00578">
    <property type="entry name" value="Glu_cys_ligase"/>
    <property type="match status" value="1"/>
</dbReference>
<dbReference type="InterPro" id="IPR014746">
    <property type="entry name" value="Gln_synth/guanido_kin_cat_dom"/>
</dbReference>
<dbReference type="InterPro" id="IPR007370">
    <property type="entry name" value="Glu_cys_ligase"/>
</dbReference>
<dbReference type="InterPro" id="IPR006334">
    <property type="entry name" value="Glut_cys_ligase"/>
</dbReference>
<dbReference type="NCBIfam" id="TIGR01434">
    <property type="entry name" value="glu_cys_ligase"/>
    <property type="match status" value="1"/>
</dbReference>
<dbReference type="PANTHER" id="PTHR38761">
    <property type="entry name" value="GLUTAMATE--CYSTEINE LIGASE"/>
    <property type="match status" value="1"/>
</dbReference>
<dbReference type="PANTHER" id="PTHR38761:SF1">
    <property type="entry name" value="GLUTAMATE--CYSTEINE LIGASE"/>
    <property type="match status" value="1"/>
</dbReference>
<dbReference type="Pfam" id="PF04262">
    <property type="entry name" value="Glu_cys_ligase"/>
    <property type="match status" value="1"/>
</dbReference>
<dbReference type="SUPFAM" id="SSF55931">
    <property type="entry name" value="Glutamine synthetase/guanido kinase"/>
    <property type="match status" value="1"/>
</dbReference>
<reference key="1">
    <citation type="journal article" date="2009" name="BMC Genomics">
        <title>Pseudogene accumulation in the evolutionary histories of Salmonella enterica serovars Paratyphi A and Typhi.</title>
        <authorList>
            <person name="Holt K.E."/>
            <person name="Thomson N.R."/>
            <person name="Wain J."/>
            <person name="Langridge G.C."/>
            <person name="Hasan R."/>
            <person name="Bhutta Z.A."/>
            <person name="Quail M.A."/>
            <person name="Norbertczak H."/>
            <person name="Walker D."/>
            <person name="Simmonds M."/>
            <person name="White B."/>
            <person name="Bason N."/>
            <person name="Mungall K."/>
            <person name="Dougan G."/>
            <person name="Parkhill J."/>
        </authorList>
    </citation>
    <scope>NUCLEOTIDE SEQUENCE [LARGE SCALE GENOMIC DNA]</scope>
    <source>
        <strain>AKU_12601</strain>
    </source>
</reference>
<keyword id="KW-0067">ATP-binding</keyword>
<keyword id="KW-0317">Glutathione biosynthesis</keyword>
<keyword id="KW-0436">Ligase</keyword>
<keyword id="KW-0547">Nucleotide-binding</keyword>
<gene>
    <name evidence="1" type="primary">gshA</name>
    <name type="ordered locus">SSPA2495</name>
</gene>
<proteinExistence type="inferred from homology"/>
<protein>
    <recommendedName>
        <fullName evidence="1">Glutamate--cysteine ligase</fullName>
        <ecNumber evidence="1">6.3.2.2</ecNumber>
    </recommendedName>
    <alternativeName>
        <fullName evidence="1">Gamma-ECS</fullName>
        <shortName evidence="1">GCS</shortName>
    </alternativeName>
    <alternativeName>
        <fullName evidence="1">Gamma-glutamylcysteine synthetase</fullName>
    </alternativeName>
</protein>
<name>GSH1_SALPK</name>
<sequence>MIPDVSQALAWLEKHPQALKGIQRGLERETLRVNADGTLATTGHPEALGSALTHKWITTDFAEALLEFITPVDGDIQHMLTFMRDLHRYTARKLGDERMWPLSMPCYIAEGQDIELAQYGTSNTGRFKTLYREGLKNRYGALMQTISGVHYNFSLPMAFWQAKCGVTEGEAAKEKISAGYFRLIRNYYRFGWVIPYLFGASPAICSSFLQGKPTTLPFEKTDCGMYYLPYATSLRLSDLGYTNKSQSNLGITFNDLHEYVAGLKRAIKTPSEEYARIGVEKDGKRLQINSNVLQIENELYAPIRPKRVTRSGESPSDALLRGGIEYIEVRSLDINPFSPIGVDEQQVRFLDLFMVWCVLADAPEMSSDELLCTRTNWNRVILEGRKPGLTLGIGCETAQFPLPKVGKDLFRDLKRVAQTLDSIHGGEEYQKVCDELVACFDNPELTFSARILRSMIDEGIGGTGKAFGEAYRNLLREEPLEILQEEEFIAERDASVRRQQEIEAADTEPFAAWLAKHA</sequence>
<comment type="catalytic activity">
    <reaction evidence="1">
        <text>L-cysteine + L-glutamate + ATP = gamma-L-glutamyl-L-cysteine + ADP + phosphate + H(+)</text>
        <dbReference type="Rhea" id="RHEA:13285"/>
        <dbReference type="ChEBI" id="CHEBI:15378"/>
        <dbReference type="ChEBI" id="CHEBI:29985"/>
        <dbReference type="ChEBI" id="CHEBI:30616"/>
        <dbReference type="ChEBI" id="CHEBI:35235"/>
        <dbReference type="ChEBI" id="CHEBI:43474"/>
        <dbReference type="ChEBI" id="CHEBI:58173"/>
        <dbReference type="ChEBI" id="CHEBI:456216"/>
        <dbReference type="EC" id="6.3.2.2"/>
    </reaction>
</comment>
<comment type="pathway">
    <text evidence="1">Sulfur metabolism; glutathione biosynthesis; glutathione from L-cysteine and L-glutamate: step 1/2.</text>
</comment>
<comment type="similarity">
    <text evidence="1">Belongs to the glutamate--cysteine ligase type 1 family. Type 1 subfamily.</text>
</comment>